<evidence type="ECO:0000250" key="1"/>
<evidence type="ECO:0000255" key="2"/>
<evidence type="ECO:0000305" key="3"/>
<comment type="function">
    <text evidence="1">Core subunit of the mitochondrial membrane respiratory chain NADH dehydrogenase (Complex I) that is believed to belong to the minimal assembly required for catalysis. Complex I functions in the transfer of electrons from NADH to the respiratory chain. The immediate electron acceptor for the enzyme is believed to be ubiquinone (By similarity).</text>
</comment>
<comment type="catalytic activity">
    <reaction>
        <text>a ubiquinone + NADH + 5 H(+)(in) = a ubiquinol + NAD(+) + 4 H(+)(out)</text>
        <dbReference type="Rhea" id="RHEA:29091"/>
        <dbReference type="Rhea" id="RHEA-COMP:9565"/>
        <dbReference type="Rhea" id="RHEA-COMP:9566"/>
        <dbReference type="ChEBI" id="CHEBI:15378"/>
        <dbReference type="ChEBI" id="CHEBI:16389"/>
        <dbReference type="ChEBI" id="CHEBI:17976"/>
        <dbReference type="ChEBI" id="CHEBI:57540"/>
        <dbReference type="ChEBI" id="CHEBI:57945"/>
        <dbReference type="EC" id="7.1.1.2"/>
    </reaction>
</comment>
<comment type="subcellular location">
    <subcellularLocation>
        <location evidence="1">Mitochondrion membrane</location>
        <topology evidence="1">Multi-pass membrane protein</topology>
    </subcellularLocation>
</comment>
<comment type="similarity">
    <text evidence="3">Belongs to the complex I subunit 4 family.</text>
</comment>
<geneLocation type="mitochondrion"/>
<keyword id="KW-0249">Electron transport</keyword>
<keyword id="KW-0472">Membrane</keyword>
<keyword id="KW-0496">Mitochondrion</keyword>
<keyword id="KW-0520">NAD</keyword>
<keyword id="KW-0679">Respiratory chain</keyword>
<keyword id="KW-1278">Translocase</keyword>
<keyword id="KW-0812">Transmembrane</keyword>
<keyword id="KW-1133">Transmembrane helix</keyword>
<keyword id="KW-0813">Transport</keyword>
<keyword id="KW-0830">Ubiquinone</keyword>
<proteinExistence type="inferred from homology"/>
<gene>
    <name type="primary">ND4</name>
</gene>
<protein>
    <recommendedName>
        <fullName>NADH-ubiquinone oxidoreductase chain 4</fullName>
        <ecNumber>7.1.1.2</ecNumber>
    </recommendedName>
    <alternativeName>
        <fullName>NADH dehydrogenase subunit 4</fullName>
    </alternativeName>
</protein>
<feature type="chain" id="PRO_0000117987" description="NADH-ubiquinone oxidoreductase chain 4">
    <location>
        <begin position="1" status="less than"/>
        <end position="79" status="greater than"/>
    </location>
</feature>
<feature type="transmembrane region" description="Helical" evidence="2">
    <location>
        <begin position="24"/>
        <end position="44"/>
    </location>
</feature>
<feature type="transmembrane region" description="Helical" evidence="2">
    <location>
        <begin position="54"/>
        <end position="74"/>
    </location>
</feature>
<feature type="non-terminal residue">
    <location>
        <position position="1"/>
    </location>
</feature>
<feature type="non-terminal residue">
    <location>
        <position position="79"/>
    </location>
</feature>
<dbReference type="EC" id="7.1.1.2"/>
<dbReference type="EMBL" id="U17739">
    <property type="protein sequence ID" value="AAA95988.1"/>
    <property type="molecule type" value="Genomic_DNA"/>
</dbReference>
<dbReference type="SMR" id="P50660"/>
<dbReference type="GO" id="GO:0031966">
    <property type="term" value="C:mitochondrial membrane"/>
    <property type="evidence" value="ECO:0007669"/>
    <property type="project" value="UniProtKB-SubCell"/>
</dbReference>
<dbReference type="GO" id="GO:0008137">
    <property type="term" value="F:NADH dehydrogenase (ubiquinone) activity"/>
    <property type="evidence" value="ECO:0007669"/>
    <property type="project" value="UniProtKB-EC"/>
</dbReference>
<dbReference type="GO" id="GO:0048039">
    <property type="term" value="F:ubiquinone binding"/>
    <property type="evidence" value="ECO:0007669"/>
    <property type="project" value="TreeGrafter"/>
</dbReference>
<dbReference type="GO" id="GO:0042773">
    <property type="term" value="P:ATP synthesis coupled electron transport"/>
    <property type="evidence" value="ECO:0007669"/>
    <property type="project" value="InterPro"/>
</dbReference>
<dbReference type="GO" id="GO:0015990">
    <property type="term" value="P:electron transport coupled proton transport"/>
    <property type="evidence" value="ECO:0007669"/>
    <property type="project" value="TreeGrafter"/>
</dbReference>
<dbReference type="InterPro" id="IPR003918">
    <property type="entry name" value="NADH_UbQ_OxRdtase"/>
</dbReference>
<dbReference type="InterPro" id="IPR001750">
    <property type="entry name" value="ND/Mrp_TM"/>
</dbReference>
<dbReference type="PANTHER" id="PTHR43507">
    <property type="entry name" value="NADH-UBIQUINONE OXIDOREDUCTASE CHAIN 4"/>
    <property type="match status" value="1"/>
</dbReference>
<dbReference type="PANTHER" id="PTHR43507:SF20">
    <property type="entry name" value="NADH-UBIQUINONE OXIDOREDUCTASE CHAIN 4"/>
    <property type="match status" value="1"/>
</dbReference>
<dbReference type="Pfam" id="PF00361">
    <property type="entry name" value="Proton_antipo_M"/>
    <property type="match status" value="1"/>
</dbReference>
<accession>P50660</accession>
<reference key="1">
    <citation type="journal article" date="1995" name="Insect Mol. Biol.">
        <title>The Simulium damnosum species complex: phylogenetic analysis and molecular identification based upon mitochondrially encoded gene sequences.</title>
        <authorList>
            <person name="Tang J."/>
            <person name="Toe L."/>
            <person name="Back C."/>
            <person name="Zimmerman P.A."/>
            <person name="Pruess K."/>
            <person name="Unnasch T.R."/>
        </authorList>
    </citation>
    <scope>NUCLEOTIDE SEQUENCE [GENOMIC DNA]</scope>
</reference>
<sequence>SVVAHMGIVLSGLMTLTMWGISGSYTLMIAHGLCSSGLFCLANISYERMGSRSLLINKGLLNFMPSLSLWWFLLCSSNM</sequence>
<name>NU4M_SIMVI</name>
<organism>
    <name type="scientific">Simulium vittatum</name>
    <name type="common">Striped black fly</name>
    <dbReference type="NCBI Taxonomy" id="7192"/>
    <lineage>
        <taxon>Eukaryota</taxon>
        <taxon>Metazoa</taxon>
        <taxon>Ecdysozoa</taxon>
        <taxon>Arthropoda</taxon>
        <taxon>Hexapoda</taxon>
        <taxon>Insecta</taxon>
        <taxon>Pterygota</taxon>
        <taxon>Neoptera</taxon>
        <taxon>Endopterygota</taxon>
        <taxon>Diptera</taxon>
        <taxon>Nematocera</taxon>
        <taxon>Chironomoidea</taxon>
        <taxon>Simuliidae</taxon>
        <taxon>Simulium</taxon>
    </lineage>
</organism>